<proteinExistence type="inferred from homology"/>
<keyword id="KW-0963">Cytoplasm</keyword>
<keyword id="KW-0227">DNA damage</keyword>
<keyword id="KW-0234">DNA repair</keyword>
<keyword id="KW-0378">Hydrolase</keyword>
<keyword id="KW-1185">Reference proteome</keyword>
<accession>Q8FPQ4</accession>
<feature type="chain" id="PRO_0000176087" description="Uracil-DNA glycosylase">
    <location>
        <begin position="1"/>
        <end position="238"/>
    </location>
</feature>
<feature type="active site" description="Proton acceptor" evidence="1">
    <location>
        <position position="81"/>
    </location>
</feature>
<name>UNG_COREF</name>
<comment type="function">
    <text evidence="1">Excises uracil residues from the DNA which can arise as a result of misincorporation of dUMP residues by DNA polymerase or due to deamination of cytosine.</text>
</comment>
<comment type="catalytic activity">
    <reaction evidence="1">
        <text>Hydrolyzes single-stranded DNA or mismatched double-stranded DNA and polynucleotides, releasing free uracil.</text>
        <dbReference type="EC" id="3.2.2.27"/>
    </reaction>
</comment>
<comment type="subcellular location">
    <subcellularLocation>
        <location evidence="1">Cytoplasm</location>
    </subcellularLocation>
</comment>
<comment type="similarity">
    <text evidence="1">Belongs to the uracil-DNA glycosylase (UDG) superfamily. UNG family.</text>
</comment>
<protein>
    <recommendedName>
        <fullName evidence="1">Uracil-DNA glycosylase</fullName>
        <shortName evidence="1">UDG</shortName>
        <ecNumber evidence="1">3.2.2.27</ecNumber>
    </recommendedName>
</protein>
<organism>
    <name type="scientific">Corynebacterium efficiens (strain DSM 44549 / YS-314 / AJ 12310 / JCM 11189 / NBRC 100395)</name>
    <dbReference type="NCBI Taxonomy" id="196164"/>
    <lineage>
        <taxon>Bacteria</taxon>
        <taxon>Bacillati</taxon>
        <taxon>Actinomycetota</taxon>
        <taxon>Actinomycetes</taxon>
        <taxon>Mycobacteriales</taxon>
        <taxon>Corynebacteriaceae</taxon>
        <taxon>Corynebacterium</taxon>
    </lineage>
</organism>
<dbReference type="EC" id="3.2.2.27" evidence="1"/>
<dbReference type="EMBL" id="BA000035">
    <property type="protein sequence ID" value="BAC18246.1"/>
    <property type="molecule type" value="Genomic_DNA"/>
</dbReference>
<dbReference type="RefSeq" id="WP_006769398.1">
    <property type="nucleotide sequence ID" value="NC_004369.1"/>
</dbReference>
<dbReference type="SMR" id="Q8FPQ4"/>
<dbReference type="STRING" id="196164.gene:10741850"/>
<dbReference type="KEGG" id="cef:CE1436"/>
<dbReference type="eggNOG" id="COG0692">
    <property type="taxonomic scope" value="Bacteria"/>
</dbReference>
<dbReference type="HOGENOM" id="CLU_032162_3_1_11"/>
<dbReference type="OrthoDB" id="9804372at2"/>
<dbReference type="Proteomes" id="UP000001409">
    <property type="component" value="Chromosome"/>
</dbReference>
<dbReference type="GO" id="GO:0005737">
    <property type="term" value="C:cytoplasm"/>
    <property type="evidence" value="ECO:0007669"/>
    <property type="project" value="UniProtKB-SubCell"/>
</dbReference>
<dbReference type="GO" id="GO:0004844">
    <property type="term" value="F:uracil DNA N-glycosylase activity"/>
    <property type="evidence" value="ECO:0007669"/>
    <property type="project" value="UniProtKB-UniRule"/>
</dbReference>
<dbReference type="GO" id="GO:0097510">
    <property type="term" value="P:base-excision repair, AP site formation via deaminated base removal"/>
    <property type="evidence" value="ECO:0007669"/>
    <property type="project" value="TreeGrafter"/>
</dbReference>
<dbReference type="CDD" id="cd10027">
    <property type="entry name" value="UDG-F1-like"/>
    <property type="match status" value="1"/>
</dbReference>
<dbReference type="FunFam" id="3.40.470.10:FF:000006">
    <property type="entry name" value="Uracil-DNA glycosylase"/>
    <property type="match status" value="1"/>
</dbReference>
<dbReference type="Gene3D" id="3.40.470.10">
    <property type="entry name" value="Uracil-DNA glycosylase-like domain"/>
    <property type="match status" value="1"/>
</dbReference>
<dbReference type="HAMAP" id="MF_00148">
    <property type="entry name" value="UDG"/>
    <property type="match status" value="1"/>
</dbReference>
<dbReference type="InterPro" id="IPR002043">
    <property type="entry name" value="UDG_fam1"/>
</dbReference>
<dbReference type="InterPro" id="IPR018085">
    <property type="entry name" value="Ura-DNA_Glyclase_AS"/>
</dbReference>
<dbReference type="InterPro" id="IPR005122">
    <property type="entry name" value="Uracil-DNA_glycosylase-like"/>
</dbReference>
<dbReference type="InterPro" id="IPR036895">
    <property type="entry name" value="Uracil-DNA_glycosylase-like_sf"/>
</dbReference>
<dbReference type="NCBIfam" id="NF003588">
    <property type="entry name" value="PRK05254.1-1"/>
    <property type="match status" value="1"/>
</dbReference>
<dbReference type="NCBIfam" id="NF003592">
    <property type="entry name" value="PRK05254.1-5"/>
    <property type="match status" value="1"/>
</dbReference>
<dbReference type="NCBIfam" id="TIGR00628">
    <property type="entry name" value="ung"/>
    <property type="match status" value="1"/>
</dbReference>
<dbReference type="PANTHER" id="PTHR11264">
    <property type="entry name" value="URACIL-DNA GLYCOSYLASE"/>
    <property type="match status" value="1"/>
</dbReference>
<dbReference type="PANTHER" id="PTHR11264:SF0">
    <property type="entry name" value="URACIL-DNA GLYCOSYLASE"/>
    <property type="match status" value="1"/>
</dbReference>
<dbReference type="Pfam" id="PF03167">
    <property type="entry name" value="UDG"/>
    <property type="match status" value="1"/>
</dbReference>
<dbReference type="SMART" id="SM00986">
    <property type="entry name" value="UDG"/>
    <property type="match status" value="1"/>
</dbReference>
<dbReference type="SMART" id="SM00987">
    <property type="entry name" value="UreE_C"/>
    <property type="match status" value="1"/>
</dbReference>
<dbReference type="SUPFAM" id="SSF52141">
    <property type="entry name" value="Uracil-DNA glycosylase-like"/>
    <property type="match status" value="1"/>
</dbReference>
<dbReference type="PROSITE" id="PS00130">
    <property type="entry name" value="U_DNA_GLYCOSYLASE"/>
    <property type="match status" value="1"/>
</dbReference>
<reference key="1">
    <citation type="journal article" date="2003" name="Genome Res.">
        <title>Comparative complete genome sequence analysis of the amino acid replacements responsible for the thermostability of Corynebacterium efficiens.</title>
        <authorList>
            <person name="Nishio Y."/>
            <person name="Nakamura Y."/>
            <person name="Kawarabayasi Y."/>
            <person name="Usuda Y."/>
            <person name="Kimura E."/>
            <person name="Sugimoto S."/>
            <person name="Matsui K."/>
            <person name="Yamagishi A."/>
            <person name="Kikuchi H."/>
            <person name="Ikeo K."/>
            <person name="Gojobori T."/>
        </authorList>
    </citation>
    <scope>NUCLEOTIDE SEQUENCE [LARGE SCALE GENOMIC DNA]</scope>
    <source>
        <strain>DSM 44549 / YS-314 / AJ 12310 / JCM 11189 / NBRC 100395</strain>
    </source>
</reference>
<sequence>MPVDEQPTTPEAVQWRTIEDLPIHPSWRKVLEPVMDQIRDLGQFLTAETQAGRGFLPPEPDIFRAFSYPFEEVKVLILGQDPYPTPGHSMGLCFSTQPGVRPLPRSLVNIFKEMATDLGVSINATDGDLRPWSRQGVMLLNRVLTVQPGNSNSHKGRGWEAVTEAAITALGQRDQPLVAILWGRQAQAVQKFLGDTPCITSAHPSPLSASRGFFGSRPFSTTNRMLDDLGATPVDWRL</sequence>
<gene>
    <name evidence="1" type="primary">ung</name>
    <name type="ordered locus">CE1436</name>
</gene>
<evidence type="ECO:0000255" key="1">
    <source>
        <dbReference type="HAMAP-Rule" id="MF_00148"/>
    </source>
</evidence>